<keyword id="KW-0029">Amino-acid transport</keyword>
<keyword id="KW-0997">Cell inner membrane</keyword>
<keyword id="KW-1003">Cell membrane</keyword>
<keyword id="KW-0472">Membrane</keyword>
<keyword id="KW-1185">Reference proteome</keyword>
<keyword id="KW-0812">Transmembrane</keyword>
<keyword id="KW-1133">Transmembrane helix</keyword>
<keyword id="KW-0813">Transport</keyword>
<accession>Q8FF11</accession>
<reference key="1">
    <citation type="journal article" date="2002" name="Proc. Natl. Acad. Sci. U.S.A.">
        <title>Extensive mosaic structure revealed by the complete genome sequence of uropathogenic Escherichia coli.</title>
        <authorList>
            <person name="Welch R.A."/>
            <person name="Burland V."/>
            <person name="Plunkett G. III"/>
            <person name="Redford P."/>
            <person name="Roesch P."/>
            <person name="Rasko D."/>
            <person name="Buckles E.L."/>
            <person name="Liou S.-R."/>
            <person name="Boutin A."/>
            <person name="Hackett J."/>
            <person name="Stroud D."/>
            <person name="Mayhew G.F."/>
            <person name="Rose D.J."/>
            <person name="Zhou S."/>
            <person name="Schwartz D.C."/>
            <person name="Perna N.T."/>
            <person name="Mobley H.L.T."/>
            <person name="Donnenberg M.S."/>
            <person name="Blattner F.R."/>
        </authorList>
    </citation>
    <scope>NUCLEOTIDE SEQUENCE [LARGE SCALE GENOMIC DNA]</scope>
    <source>
        <strain>CFT073 / ATCC 700928 / UPEC</strain>
    </source>
</reference>
<feature type="chain" id="PRO_0000318724" description="Cysteine/O-acetylserine efflux protein">
    <location>
        <begin position="1"/>
        <end position="195"/>
    </location>
</feature>
<feature type="topological domain" description="Periplasmic" evidence="2">
    <location>
        <begin position="1"/>
        <end position="7"/>
    </location>
</feature>
<feature type="transmembrane region" description="Helical" evidence="2">
    <location>
        <begin position="8"/>
        <end position="28"/>
    </location>
</feature>
<feature type="topological domain" description="Cytoplasmic" evidence="2">
    <location>
        <begin position="29"/>
        <end position="46"/>
    </location>
</feature>
<feature type="transmembrane region" description="Helical" evidence="2">
    <location>
        <begin position="47"/>
        <end position="67"/>
    </location>
</feature>
<feature type="topological domain" description="Periplasmic" evidence="2">
    <location>
        <begin position="68"/>
        <end position="69"/>
    </location>
</feature>
<feature type="transmembrane region" description="Helical" evidence="2">
    <location>
        <begin position="70"/>
        <end position="90"/>
    </location>
</feature>
<feature type="topological domain" description="Cytoplasmic" evidence="2">
    <location>
        <begin position="91"/>
        <end position="104"/>
    </location>
</feature>
<feature type="transmembrane region" description="Helical" evidence="2">
    <location>
        <begin position="105"/>
        <end position="125"/>
    </location>
</feature>
<feature type="topological domain" description="Periplasmic" evidence="2">
    <location>
        <begin position="126"/>
        <end position="141"/>
    </location>
</feature>
<feature type="transmembrane region" description="Helical" evidence="2">
    <location>
        <begin position="142"/>
        <end position="162"/>
    </location>
</feature>
<feature type="topological domain" description="Cytoplasmic" evidence="2">
    <location>
        <begin position="163"/>
        <end position="176"/>
    </location>
</feature>
<feature type="transmembrane region" description="Helical" evidence="2">
    <location>
        <begin position="177"/>
        <end position="194"/>
    </location>
</feature>
<feature type="topological domain" description="Periplasmic" evidence="1">
    <location>
        <position position="195"/>
    </location>
</feature>
<name>EAMB_ECOL6</name>
<organism>
    <name type="scientific">Escherichia coli O6:H1 (strain CFT073 / ATCC 700928 / UPEC)</name>
    <dbReference type="NCBI Taxonomy" id="199310"/>
    <lineage>
        <taxon>Bacteria</taxon>
        <taxon>Pseudomonadati</taxon>
        <taxon>Pseudomonadota</taxon>
        <taxon>Gammaproteobacteria</taxon>
        <taxon>Enterobacterales</taxon>
        <taxon>Enterobacteriaceae</taxon>
        <taxon>Escherichia</taxon>
    </lineage>
</organism>
<evidence type="ECO:0000250" key="1">
    <source>
        <dbReference type="UniProtKB" id="P38101"/>
    </source>
</evidence>
<evidence type="ECO:0000255" key="2"/>
<evidence type="ECO:0000305" key="3"/>
<dbReference type="EMBL" id="AE014075">
    <property type="protein sequence ID" value="AAN81551.1"/>
    <property type="molecule type" value="Genomic_DNA"/>
</dbReference>
<dbReference type="RefSeq" id="WP_000189209.1">
    <property type="nucleotide sequence ID" value="NZ_CP051263.1"/>
</dbReference>
<dbReference type="STRING" id="199310.c3102"/>
<dbReference type="KEGG" id="ecc:c3102"/>
<dbReference type="eggNOG" id="COG1280">
    <property type="taxonomic scope" value="Bacteria"/>
</dbReference>
<dbReference type="HOGENOM" id="CLU_079569_1_2_6"/>
<dbReference type="BioCyc" id="ECOL199310:C3102-MONOMER"/>
<dbReference type="Proteomes" id="UP000001410">
    <property type="component" value="Chromosome"/>
</dbReference>
<dbReference type="GO" id="GO:0005886">
    <property type="term" value="C:plasma membrane"/>
    <property type="evidence" value="ECO:0007669"/>
    <property type="project" value="UniProtKB-SubCell"/>
</dbReference>
<dbReference type="GO" id="GO:0015171">
    <property type="term" value="F:amino acid transmembrane transporter activity"/>
    <property type="evidence" value="ECO:0007669"/>
    <property type="project" value="TreeGrafter"/>
</dbReference>
<dbReference type="GO" id="GO:0033228">
    <property type="term" value="P:cysteine export across plasma membrane"/>
    <property type="evidence" value="ECO:0007669"/>
    <property type="project" value="TreeGrafter"/>
</dbReference>
<dbReference type="InterPro" id="IPR001123">
    <property type="entry name" value="LeuE-type"/>
</dbReference>
<dbReference type="NCBIfam" id="NF007653">
    <property type="entry name" value="PRK10323.1"/>
    <property type="match status" value="1"/>
</dbReference>
<dbReference type="PANTHER" id="PTHR30086">
    <property type="entry name" value="ARGININE EXPORTER PROTEIN ARGO"/>
    <property type="match status" value="1"/>
</dbReference>
<dbReference type="PANTHER" id="PTHR30086:SF20">
    <property type="entry name" value="ARGININE EXPORTER PROTEIN ARGO-RELATED"/>
    <property type="match status" value="1"/>
</dbReference>
<dbReference type="Pfam" id="PF01810">
    <property type="entry name" value="LysE"/>
    <property type="match status" value="1"/>
</dbReference>
<protein>
    <recommendedName>
        <fullName evidence="1">Cysteine/O-acetylserine efflux protein</fullName>
    </recommendedName>
</protein>
<sequence length="195" mass="21278">MTPTLLSAFWTYTLITAMTPGPNNILALSSATSHGFRQSTRVLAGMSLGFLIVMLLCAGISFSLAVIDPAAVHLLSWAGAAYIVWLAWKIATSPTKEDGLQTKPISFWASFALQFVNVKIILYGVTALSTFVLPQTQALSWVVGVSVLLAMIGTFGNVCWALAGHLFQRLFRQYGRQLNIVLALLLVYCAVRIFY</sequence>
<proteinExistence type="inferred from homology"/>
<comment type="function">
    <text evidence="1">Exporter of O-acetylserine (OAS) and cysteine.</text>
</comment>
<comment type="catalytic activity">
    <reaction evidence="1">
        <text>O-acetyl-L-serine(in) = O-acetyl-L-serine(out)</text>
        <dbReference type="Rhea" id="RHEA:29659"/>
        <dbReference type="ChEBI" id="CHEBI:58340"/>
    </reaction>
    <physiologicalReaction direction="left-to-right" evidence="1">
        <dbReference type="Rhea" id="RHEA:29660"/>
    </physiologicalReaction>
</comment>
<comment type="catalytic activity">
    <reaction evidence="1">
        <text>L-cysteine(in) = L-cysteine(out)</text>
        <dbReference type="Rhea" id="RHEA:29655"/>
        <dbReference type="ChEBI" id="CHEBI:35235"/>
    </reaction>
    <physiologicalReaction direction="left-to-right" evidence="1">
        <dbReference type="Rhea" id="RHEA:29656"/>
    </physiologicalReaction>
</comment>
<comment type="subcellular location">
    <subcellularLocation>
        <location evidence="1">Cell inner membrane</location>
        <topology evidence="2">Multi-pass membrane protein</topology>
    </subcellularLocation>
</comment>
<comment type="similarity">
    <text evidence="3">Belongs to the Rht family.</text>
</comment>
<gene>
    <name type="primary">eamB</name>
    <name type="ordered locus">c3102</name>
</gene>